<keyword id="KW-0150">Chloroplast</keyword>
<keyword id="KW-0249">Electron transport</keyword>
<keyword id="KW-0349">Heme</keyword>
<keyword id="KW-0408">Iron</keyword>
<keyword id="KW-0472">Membrane</keyword>
<keyword id="KW-0479">Metal-binding</keyword>
<keyword id="KW-0602">Photosynthesis</keyword>
<keyword id="KW-0934">Plastid</keyword>
<keyword id="KW-0732">Signal</keyword>
<keyword id="KW-0793">Thylakoid</keyword>
<keyword id="KW-0812">Transmembrane</keyword>
<keyword id="KW-1133">Transmembrane helix</keyword>
<keyword id="KW-0813">Transport</keyword>
<proteinExistence type="inferred from homology"/>
<sequence>MENRNTFSWVKEQITRSISVSIMIYVITRTSISNAYPIFAQQGYENPREATGRIVCANCHLASKPVDIEVPQAVLPDTVFEAVLRIPYDMQLKQVLANGKKGGLNVGAVLILPEGFELAPPDRISPELKEKIGNLAFQSYRPDKKNILVIGPVPGKKYSEIVFPILSPDPATKKDAHFLKYPIYVGGNRGRGQIYPDGSKSNNTVYNATSTGIVRKILRKEKGGYEISIVDASDGRQVIDIIPPGPELLVSEGESIKIDQPLTSNPNVGGFGQGDAEIVLQDPLRVQGLLFFFASVILAQVFLVLKKKQFEKVQLYEMNF</sequence>
<dbReference type="EMBL" id="EF115541">
    <property type="protein sequence ID" value="ABK79425.1"/>
    <property type="molecule type" value="Genomic_DNA"/>
</dbReference>
<dbReference type="RefSeq" id="YP_010144438.1">
    <property type="nucleotide sequence ID" value="NC_056985.1"/>
</dbReference>
<dbReference type="RefSeq" id="YP_874665.1">
    <property type="nucleotide sequence ID" value="NC_008590.1"/>
</dbReference>
<dbReference type="SMR" id="A1E9K3"/>
<dbReference type="GeneID" id="4525192"/>
<dbReference type="GeneID" id="67140624"/>
<dbReference type="OMA" id="FAHNDEI"/>
<dbReference type="GO" id="GO:0009535">
    <property type="term" value="C:chloroplast thylakoid membrane"/>
    <property type="evidence" value="ECO:0007669"/>
    <property type="project" value="UniProtKB-SubCell"/>
</dbReference>
<dbReference type="GO" id="GO:0009055">
    <property type="term" value="F:electron transfer activity"/>
    <property type="evidence" value="ECO:0007669"/>
    <property type="project" value="UniProtKB-UniRule"/>
</dbReference>
<dbReference type="GO" id="GO:0020037">
    <property type="term" value="F:heme binding"/>
    <property type="evidence" value="ECO:0007669"/>
    <property type="project" value="InterPro"/>
</dbReference>
<dbReference type="GO" id="GO:0005506">
    <property type="term" value="F:iron ion binding"/>
    <property type="evidence" value="ECO:0007669"/>
    <property type="project" value="InterPro"/>
</dbReference>
<dbReference type="GO" id="GO:0015979">
    <property type="term" value="P:photosynthesis"/>
    <property type="evidence" value="ECO:0007669"/>
    <property type="project" value="UniProtKB-UniRule"/>
</dbReference>
<dbReference type="FunFam" id="1.20.5.700:FF:000001">
    <property type="entry name" value="Cytochrome f"/>
    <property type="match status" value="1"/>
</dbReference>
<dbReference type="FunFam" id="2.40.50.100:FF:000007">
    <property type="entry name" value="Cytochrome f"/>
    <property type="match status" value="1"/>
</dbReference>
<dbReference type="FunFam" id="2.60.40.830:FF:000001">
    <property type="entry name" value="Cytochrome f"/>
    <property type="match status" value="1"/>
</dbReference>
<dbReference type="Gene3D" id="2.40.50.100">
    <property type="match status" value="1"/>
</dbReference>
<dbReference type="Gene3D" id="2.60.40.830">
    <property type="entry name" value="Cytochrome f large domain"/>
    <property type="match status" value="1"/>
</dbReference>
<dbReference type="Gene3D" id="1.20.5.700">
    <property type="entry name" value="Single helix bin"/>
    <property type="match status" value="1"/>
</dbReference>
<dbReference type="HAMAP" id="MF_00610">
    <property type="entry name" value="Cytb6_f_cytF"/>
    <property type="match status" value="1"/>
</dbReference>
<dbReference type="InterPro" id="IPR024058">
    <property type="entry name" value="Cyt-f_TM"/>
</dbReference>
<dbReference type="InterPro" id="IPR002325">
    <property type="entry name" value="Cyt_f"/>
</dbReference>
<dbReference type="InterPro" id="IPR024094">
    <property type="entry name" value="Cyt_f_lg_dom"/>
</dbReference>
<dbReference type="InterPro" id="IPR036826">
    <property type="entry name" value="Cyt_f_lg_dom_sf"/>
</dbReference>
<dbReference type="InterPro" id="IPR011054">
    <property type="entry name" value="Rudment_hybrid_motif"/>
</dbReference>
<dbReference type="PANTHER" id="PTHR33288">
    <property type="match status" value="1"/>
</dbReference>
<dbReference type="PANTHER" id="PTHR33288:SF10">
    <property type="entry name" value="CYTOCHROME F"/>
    <property type="match status" value="1"/>
</dbReference>
<dbReference type="Pfam" id="PF01333">
    <property type="entry name" value="Apocytochr_F_C"/>
    <property type="match status" value="1"/>
</dbReference>
<dbReference type="Pfam" id="PF16639">
    <property type="entry name" value="Apocytochr_F_N"/>
    <property type="match status" value="1"/>
</dbReference>
<dbReference type="PRINTS" id="PR00610">
    <property type="entry name" value="CYTOCHROMEF"/>
</dbReference>
<dbReference type="SUPFAM" id="SSF103431">
    <property type="entry name" value="Cytochrome f subunit of the cytochrome b6f complex, transmembrane anchor"/>
    <property type="match status" value="1"/>
</dbReference>
<dbReference type="SUPFAM" id="SSF49441">
    <property type="entry name" value="Cytochrome f, large domain"/>
    <property type="match status" value="1"/>
</dbReference>
<dbReference type="SUPFAM" id="SSF51246">
    <property type="entry name" value="Rudiment single hybrid motif"/>
    <property type="match status" value="1"/>
</dbReference>
<dbReference type="PROSITE" id="PS51010">
    <property type="entry name" value="CYTF"/>
    <property type="match status" value="1"/>
</dbReference>
<comment type="function">
    <text evidence="2">Component of the cytochrome b6-f complex, which mediates electron transfer between photosystem II (PSII) and photosystem I (PSI), cyclic electron flow around PSI, and state transitions.</text>
</comment>
<comment type="cofactor">
    <cofactor evidence="2">
        <name>heme</name>
        <dbReference type="ChEBI" id="CHEBI:30413"/>
    </cofactor>
    <text evidence="2">Binds 1 heme group covalently.</text>
</comment>
<comment type="subunit">
    <text evidence="1">The 4 large subunits of the cytochrome b6-f complex are cytochrome b6, subunit IV (17 kDa polypeptide, petD), cytochrome f and the Rieske protein, while the 4 small subunits are PetG, PetL, PetM and PetN. The complex functions as a dimer (By similarity).</text>
</comment>
<comment type="subcellular location">
    <subcellularLocation>
        <location evidence="2">Plastid</location>
        <location evidence="2">Chloroplast thylakoid membrane</location>
        <topology evidence="2">Single-pass membrane protein</topology>
    </subcellularLocation>
</comment>
<comment type="similarity">
    <text evidence="2">Belongs to the cytochrome f family.</text>
</comment>
<name>CYF_HORVU</name>
<accession>A1E9K3</accession>
<gene>
    <name evidence="2" type="primary">petA</name>
</gene>
<protein>
    <recommendedName>
        <fullName evidence="2">Cytochrome f</fullName>
    </recommendedName>
</protein>
<evidence type="ECO:0000250" key="1"/>
<evidence type="ECO:0000255" key="2">
    <source>
        <dbReference type="HAMAP-Rule" id="MF_00610"/>
    </source>
</evidence>
<reference key="1">
    <citation type="journal article" date="2007" name="Theor. Appl. Genet.">
        <title>Complete chloroplast genome sequences of Hordeum vulgare, Sorghum bicolor and Agrostis stolonifera, and comparative analyses with other grass genomes.</title>
        <authorList>
            <person name="Saski C."/>
            <person name="Lee S.-B."/>
            <person name="Fjellheim S."/>
            <person name="Guda C."/>
            <person name="Jansen R.K."/>
            <person name="Luo H."/>
            <person name="Tomkins J."/>
            <person name="Rognli O.A."/>
            <person name="Daniell H."/>
            <person name="Clarke J.L."/>
        </authorList>
    </citation>
    <scope>NUCLEOTIDE SEQUENCE [LARGE SCALE GENOMIC DNA]</scope>
    <source>
        <strain>cv. Morex</strain>
    </source>
</reference>
<feature type="signal peptide" evidence="2">
    <location>
        <begin position="1"/>
        <end position="35"/>
    </location>
</feature>
<feature type="chain" id="PRO_0000342064" description="Cytochrome f">
    <location>
        <begin position="36"/>
        <end position="320"/>
    </location>
</feature>
<feature type="transmembrane region" description="Helical" evidence="2">
    <location>
        <begin position="286"/>
        <end position="306"/>
    </location>
</feature>
<feature type="binding site" description="axial binding residue" evidence="2">
    <location>
        <position position="36"/>
    </location>
    <ligand>
        <name>heme</name>
        <dbReference type="ChEBI" id="CHEBI:30413"/>
    </ligand>
    <ligandPart>
        <name>Fe</name>
        <dbReference type="ChEBI" id="CHEBI:18248"/>
    </ligandPart>
</feature>
<feature type="binding site" description="covalent" evidence="2">
    <location>
        <position position="56"/>
    </location>
    <ligand>
        <name>heme</name>
        <dbReference type="ChEBI" id="CHEBI:30413"/>
    </ligand>
</feature>
<feature type="binding site" description="covalent" evidence="2">
    <location>
        <position position="59"/>
    </location>
    <ligand>
        <name>heme</name>
        <dbReference type="ChEBI" id="CHEBI:30413"/>
    </ligand>
</feature>
<feature type="binding site" description="axial binding residue" evidence="2">
    <location>
        <position position="60"/>
    </location>
    <ligand>
        <name>heme</name>
        <dbReference type="ChEBI" id="CHEBI:30413"/>
    </ligand>
    <ligandPart>
        <name>Fe</name>
        <dbReference type="ChEBI" id="CHEBI:18248"/>
    </ligandPart>
</feature>
<organism>
    <name type="scientific">Hordeum vulgare</name>
    <name type="common">Barley</name>
    <dbReference type="NCBI Taxonomy" id="4513"/>
    <lineage>
        <taxon>Eukaryota</taxon>
        <taxon>Viridiplantae</taxon>
        <taxon>Streptophyta</taxon>
        <taxon>Embryophyta</taxon>
        <taxon>Tracheophyta</taxon>
        <taxon>Spermatophyta</taxon>
        <taxon>Magnoliopsida</taxon>
        <taxon>Liliopsida</taxon>
        <taxon>Poales</taxon>
        <taxon>Poaceae</taxon>
        <taxon>BOP clade</taxon>
        <taxon>Pooideae</taxon>
        <taxon>Triticodae</taxon>
        <taxon>Triticeae</taxon>
        <taxon>Hordeinae</taxon>
        <taxon>Hordeum</taxon>
    </lineage>
</organism>
<geneLocation type="chloroplast"/>